<dbReference type="EC" id="3.1.26.4" evidence="1"/>
<dbReference type="EMBL" id="CP000758">
    <property type="protein sequence ID" value="ABS13322.1"/>
    <property type="molecule type" value="Genomic_DNA"/>
</dbReference>
<dbReference type="RefSeq" id="WP_012090854.1">
    <property type="nucleotide sequence ID" value="NC_009667.1"/>
</dbReference>
<dbReference type="SMR" id="A6WWG8"/>
<dbReference type="STRING" id="439375.Oant_0591"/>
<dbReference type="GeneID" id="61316761"/>
<dbReference type="KEGG" id="oan:Oant_0591"/>
<dbReference type="PATRIC" id="fig|439375.7.peg.631"/>
<dbReference type="eggNOG" id="COG0328">
    <property type="taxonomic scope" value="Bacteria"/>
</dbReference>
<dbReference type="HOGENOM" id="CLU_030894_6_0_5"/>
<dbReference type="PhylomeDB" id="A6WWG8"/>
<dbReference type="Proteomes" id="UP000002301">
    <property type="component" value="Chromosome 1"/>
</dbReference>
<dbReference type="GO" id="GO:0005737">
    <property type="term" value="C:cytoplasm"/>
    <property type="evidence" value="ECO:0007669"/>
    <property type="project" value="UniProtKB-SubCell"/>
</dbReference>
<dbReference type="GO" id="GO:0000287">
    <property type="term" value="F:magnesium ion binding"/>
    <property type="evidence" value="ECO:0007669"/>
    <property type="project" value="UniProtKB-UniRule"/>
</dbReference>
<dbReference type="GO" id="GO:0003676">
    <property type="term" value="F:nucleic acid binding"/>
    <property type="evidence" value="ECO:0007669"/>
    <property type="project" value="InterPro"/>
</dbReference>
<dbReference type="GO" id="GO:0004523">
    <property type="term" value="F:RNA-DNA hybrid ribonuclease activity"/>
    <property type="evidence" value="ECO:0007669"/>
    <property type="project" value="UniProtKB-UniRule"/>
</dbReference>
<dbReference type="GO" id="GO:0043137">
    <property type="term" value="P:DNA replication, removal of RNA primer"/>
    <property type="evidence" value="ECO:0007669"/>
    <property type="project" value="TreeGrafter"/>
</dbReference>
<dbReference type="CDD" id="cd09278">
    <property type="entry name" value="RNase_HI_prokaryote_like"/>
    <property type="match status" value="1"/>
</dbReference>
<dbReference type="FunFam" id="3.30.420.10:FF:000089">
    <property type="entry name" value="Ribonuclease H"/>
    <property type="match status" value="1"/>
</dbReference>
<dbReference type="Gene3D" id="3.30.420.10">
    <property type="entry name" value="Ribonuclease H-like superfamily/Ribonuclease H"/>
    <property type="match status" value="1"/>
</dbReference>
<dbReference type="HAMAP" id="MF_00042">
    <property type="entry name" value="RNase_H"/>
    <property type="match status" value="1"/>
</dbReference>
<dbReference type="InterPro" id="IPR050092">
    <property type="entry name" value="RNase_H"/>
</dbReference>
<dbReference type="InterPro" id="IPR012337">
    <property type="entry name" value="RNaseH-like_sf"/>
</dbReference>
<dbReference type="InterPro" id="IPR002156">
    <property type="entry name" value="RNaseH_domain"/>
</dbReference>
<dbReference type="InterPro" id="IPR036397">
    <property type="entry name" value="RNaseH_sf"/>
</dbReference>
<dbReference type="InterPro" id="IPR022892">
    <property type="entry name" value="RNaseHI"/>
</dbReference>
<dbReference type="NCBIfam" id="NF001236">
    <property type="entry name" value="PRK00203.1"/>
    <property type="match status" value="1"/>
</dbReference>
<dbReference type="PANTHER" id="PTHR10642">
    <property type="entry name" value="RIBONUCLEASE H1"/>
    <property type="match status" value="1"/>
</dbReference>
<dbReference type="PANTHER" id="PTHR10642:SF26">
    <property type="entry name" value="RIBONUCLEASE H1"/>
    <property type="match status" value="1"/>
</dbReference>
<dbReference type="Pfam" id="PF00075">
    <property type="entry name" value="RNase_H"/>
    <property type="match status" value="1"/>
</dbReference>
<dbReference type="SUPFAM" id="SSF53098">
    <property type="entry name" value="Ribonuclease H-like"/>
    <property type="match status" value="1"/>
</dbReference>
<dbReference type="PROSITE" id="PS50879">
    <property type="entry name" value="RNASE_H_1"/>
    <property type="match status" value="1"/>
</dbReference>
<protein>
    <recommendedName>
        <fullName evidence="1">Ribonuclease H</fullName>
        <shortName evidence="1">RNase H</shortName>
        <ecNumber evidence="1">3.1.26.4</ecNumber>
    </recommendedName>
</protein>
<feature type="chain" id="PRO_0000332639" description="Ribonuclease H">
    <location>
        <begin position="1"/>
        <end position="154"/>
    </location>
</feature>
<feature type="domain" description="RNase H type-1" evidence="2">
    <location>
        <begin position="1"/>
        <end position="141"/>
    </location>
</feature>
<feature type="binding site" evidence="1">
    <location>
        <position position="9"/>
    </location>
    <ligand>
        <name>Mg(2+)</name>
        <dbReference type="ChEBI" id="CHEBI:18420"/>
        <label>1</label>
    </ligand>
</feature>
<feature type="binding site" evidence="1">
    <location>
        <position position="9"/>
    </location>
    <ligand>
        <name>Mg(2+)</name>
        <dbReference type="ChEBI" id="CHEBI:18420"/>
        <label>2</label>
    </ligand>
</feature>
<feature type="binding site" evidence="1">
    <location>
        <position position="47"/>
    </location>
    <ligand>
        <name>Mg(2+)</name>
        <dbReference type="ChEBI" id="CHEBI:18420"/>
        <label>1</label>
    </ligand>
</feature>
<feature type="binding site" evidence="1">
    <location>
        <position position="69"/>
    </location>
    <ligand>
        <name>Mg(2+)</name>
        <dbReference type="ChEBI" id="CHEBI:18420"/>
        <label>1</label>
    </ligand>
</feature>
<feature type="binding site" evidence="1">
    <location>
        <position position="133"/>
    </location>
    <ligand>
        <name>Mg(2+)</name>
        <dbReference type="ChEBI" id="CHEBI:18420"/>
        <label>2</label>
    </ligand>
</feature>
<reference key="1">
    <citation type="journal article" date="2011" name="J. Bacteriol.">
        <title>Genome of Ochrobactrum anthropi ATCC 49188 T, a versatile opportunistic pathogen and symbiont of several eukaryotic hosts.</title>
        <authorList>
            <person name="Chain P.S."/>
            <person name="Lang D.M."/>
            <person name="Comerci D.J."/>
            <person name="Malfatti S.A."/>
            <person name="Vergez L.M."/>
            <person name="Shin M."/>
            <person name="Ugalde R.A."/>
            <person name="Garcia E."/>
            <person name="Tolmasky M.E."/>
        </authorList>
    </citation>
    <scope>NUCLEOTIDE SEQUENCE [LARGE SCALE GENOMIC DNA]</scope>
    <source>
        <strain>ATCC 49188 / DSM 6882 / CCUG 24695 / JCM 21032 / LMG 3331 / NBRC 15819 / NCTC 12168 / Alc 37</strain>
    </source>
</reference>
<name>RNH_BRUA4</name>
<gene>
    <name evidence="1" type="primary">rnhA</name>
    <name type="ordered locus">Oant_0591</name>
</gene>
<proteinExistence type="inferred from homology"/>
<evidence type="ECO:0000255" key="1">
    <source>
        <dbReference type="HAMAP-Rule" id="MF_00042"/>
    </source>
</evidence>
<evidence type="ECO:0000255" key="2">
    <source>
        <dbReference type="PROSITE-ProRule" id="PRU00408"/>
    </source>
</evidence>
<accession>A6WWG8</accession>
<organism>
    <name type="scientific">Brucella anthropi (strain ATCC 49188 / DSM 6882 / CCUG 24695 / JCM 21032 / LMG 3331 / NBRC 15819 / NCTC 12168 / Alc 37)</name>
    <name type="common">Ochrobactrum anthropi</name>
    <dbReference type="NCBI Taxonomy" id="439375"/>
    <lineage>
        <taxon>Bacteria</taxon>
        <taxon>Pseudomonadati</taxon>
        <taxon>Pseudomonadota</taxon>
        <taxon>Alphaproteobacteria</taxon>
        <taxon>Hyphomicrobiales</taxon>
        <taxon>Brucellaceae</taxon>
        <taxon>Brucella/Ochrobactrum group</taxon>
        <taxon>Brucella</taxon>
    </lineage>
</organism>
<keyword id="KW-0963">Cytoplasm</keyword>
<keyword id="KW-0255">Endonuclease</keyword>
<keyword id="KW-0378">Hydrolase</keyword>
<keyword id="KW-0460">Magnesium</keyword>
<keyword id="KW-0479">Metal-binding</keyword>
<keyword id="KW-0540">Nuclease</keyword>
<keyword id="KW-1185">Reference proteome</keyword>
<sequence>MKRIEAYTDGACSGNPGPGGWGAILRWNDNVKELKGGEADTTNNRMELMAAISALSALKEPCEVDLYTDSVYVRDGISGWIEGWKRNGWKTAAKKPVKNAELWQALDEARKPHKVNWHWVKGHAGHPENERADELAREGMEPFKYGGRKSLKVQ</sequence>
<comment type="function">
    <text evidence="1">Endonuclease that specifically degrades the RNA of RNA-DNA hybrids.</text>
</comment>
<comment type="catalytic activity">
    <reaction evidence="1">
        <text>Endonucleolytic cleavage to 5'-phosphomonoester.</text>
        <dbReference type="EC" id="3.1.26.4"/>
    </reaction>
</comment>
<comment type="cofactor">
    <cofactor evidence="1">
        <name>Mg(2+)</name>
        <dbReference type="ChEBI" id="CHEBI:18420"/>
    </cofactor>
    <text evidence="1">Binds 1 Mg(2+) ion per subunit. May bind a second metal ion at a regulatory site, or after substrate binding.</text>
</comment>
<comment type="subunit">
    <text evidence="1">Monomer.</text>
</comment>
<comment type="subcellular location">
    <subcellularLocation>
        <location evidence="1">Cytoplasm</location>
    </subcellularLocation>
</comment>
<comment type="similarity">
    <text evidence="1">Belongs to the RNase H family.</text>
</comment>